<gene>
    <name type="primary">minE</name>
    <name type="ordered locus">DR_0751</name>
</gene>
<reference key="1">
    <citation type="journal article" date="1999" name="Science">
        <title>Genome sequence of the radioresistant bacterium Deinococcus radiodurans R1.</title>
        <authorList>
            <person name="White O."/>
            <person name="Eisen J.A."/>
            <person name="Heidelberg J.F."/>
            <person name="Hickey E.K."/>
            <person name="Peterson J.D."/>
            <person name="Dodson R.J."/>
            <person name="Haft D.H."/>
            <person name="Gwinn M.L."/>
            <person name="Nelson W.C."/>
            <person name="Richardson D.L."/>
            <person name="Moffat K.S."/>
            <person name="Qin H."/>
            <person name="Jiang L."/>
            <person name="Pamphile W."/>
            <person name="Crosby M."/>
            <person name="Shen M."/>
            <person name="Vamathevan J.J."/>
            <person name="Lam P."/>
            <person name="McDonald L.A."/>
            <person name="Utterback T.R."/>
            <person name="Zalewski C."/>
            <person name="Makarova K.S."/>
            <person name="Aravind L."/>
            <person name="Daly M.J."/>
            <person name="Minton K.W."/>
            <person name="Fleischmann R.D."/>
            <person name="Ketchum K.A."/>
            <person name="Nelson K.E."/>
            <person name="Salzberg S.L."/>
            <person name="Smith H.O."/>
            <person name="Venter J.C."/>
            <person name="Fraser C.M."/>
        </authorList>
    </citation>
    <scope>NUCLEOTIDE SEQUENCE [LARGE SCALE GENOMIC DNA]</scope>
    <source>
        <strain>ATCC 13939 / DSM 20539 / JCM 16871 / CCUG 27074 / LMG 4051 / NBRC 15346 / NCIMB 9279 / VKM B-1422 / R1</strain>
    </source>
</reference>
<accession>Q9RWB8</accession>
<comment type="function">
    <text evidence="1">Prevents the cell division inhibition by proteins MinC and MinD at internal division sites while permitting inhibition at polar sites. This ensures cell division at the proper site by restricting the formation of a division septum at the midpoint of the long axis of the cell (By similarity).</text>
</comment>
<comment type="similarity">
    <text evidence="3">Belongs to the MinE family.</text>
</comment>
<keyword id="KW-0131">Cell cycle</keyword>
<keyword id="KW-0132">Cell division</keyword>
<keyword id="KW-1185">Reference proteome</keyword>
<sequence>MFGWFKGRRSKETLKDRLELVLAYDRAKIAPGKVEALRNDLLEVVQKYFPSGNSKVEVEQDGDKVVLMASISIEEASLSTEEESAAEDKSDKPSA</sequence>
<evidence type="ECO:0000250" key="1"/>
<evidence type="ECO:0000256" key="2">
    <source>
        <dbReference type="SAM" id="MobiDB-lite"/>
    </source>
</evidence>
<evidence type="ECO:0000305" key="3"/>
<feature type="chain" id="PRO_0000205873" description="Cell division topological specificity factor">
    <location>
        <begin position="1"/>
        <end position="95"/>
    </location>
</feature>
<feature type="region of interest" description="Disordered" evidence="2">
    <location>
        <begin position="76"/>
        <end position="95"/>
    </location>
</feature>
<feature type="compositionally biased region" description="Basic and acidic residues" evidence="2">
    <location>
        <begin position="86"/>
        <end position="95"/>
    </location>
</feature>
<dbReference type="EMBL" id="AE000513">
    <property type="protein sequence ID" value="AAF10330.1"/>
    <property type="molecule type" value="Genomic_DNA"/>
</dbReference>
<dbReference type="PIR" id="C75478">
    <property type="entry name" value="C75478"/>
</dbReference>
<dbReference type="RefSeq" id="NP_294475.1">
    <property type="nucleotide sequence ID" value="NC_001263.1"/>
</dbReference>
<dbReference type="RefSeq" id="WP_010887397.1">
    <property type="nucleotide sequence ID" value="NC_001263.1"/>
</dbReference>
<dbReference type="STRING" id="243230.DR_0751"/>
<dbReference type="PaxDb" id="243230-DR_0751"/>
<dbReference type="EnsemblBacteria" id="AAF10330">
    <property type="protein sequence ID" value="AAF10330"/>
    <property type="gene ID" value="DR_0751"/>
</dbReference>
<dbReference type="GeneID" id="69516996"/>
<dbReference type="KEGG" id="dra:DR_0751"/>
<dbReference type="PATRIC" id="fig|243230.17.peg.931"/>
<dbReference type="eggNOG" id="COG0851">
    <property type="taxonomic scope" value="Bacteria"/>
</dbReference>
<dbReference type="HOGENOM" id="CLU_137929_1_2_0"/>
<dbReference type="InParanoid" id="Q9RWB8"/>
<dbReference type="OrthoDB" id="71205at2"/>
<dbReference type="Proteomes" id="UP000002524">
    <property type="component" value="Chromosome 1"/>
</dbReference>
<dbReference type="GO" id="GO:0005886">
    <property type="term" value="C:plasma membrane"/>
    <property type="evidence" value="ECO:0000318"/>
    <property type="project" value="GO_Central"/>
</dbReference>
<dbReference type="GO" id="GO:0000918">
    <property type="term" value="P:division septum site selection"/>
    <property type="evidence" value="ECO:0000318"/>
    <property type="project" value="GO_Central"/>
</dbReference>
<dbReference type="GO" id="GO:0032955">
    <property type="term" value="P:regulation of division septum assembly"/>
    <property type="evidence" value="ECO:0007669"/>
    <property type="project" value="InterPro"/>
</dbReference>
<dbReference type="Gene3D" id="3.30.1070.10">
    <property type="entry name" value="Cell division topological specificity factor MinE"/>
    <property type="match status" value="1"/>
</dbReference>
<dbReference type="HAMAP" id="MF_00262">
    <property type="entry name" value="MinE"/>
    <property type="match status" value="1"/>
</dbReference>
<dbReference type="InterPro" id="IPR005527">
    <property type="entry name" value="MinE"/>
</dbReference>
<dbReference type="InterPro" id="IPR036707">
    <property type="entry name" value="MinE_sf"/>
</dbReference>
<dbReference type="NCBIfam" id="TIGR01215">
    <property type="entry name" value="minE"/>
    <property type="match status" value="1"/>
</dbReference>
<dbReference type="Pfam" id="PF03776">
    <property type="entry name" value="MinE"/>
    <property type="match status" value="1"/>
</dbReference>
<dbReference type="SUPFAM" id="SSF55229">
    <property type="entry name" value="Cell division protein MinE topological specificity domain"/>
    <property type="match status" value="1"/>
</dbReference>
<organism>
    <name type="scientific">Deinococcus radiodurans (strain ATCC 13939 / DSM 20539 / JCM 16871 / CCUG 27074 / LMG 4051 / NBRC 15346 / NCIMB 9279 / VKM B-1422 / R1)</name>
    <dbReference type="NCBI Taxonomy" id="243230"/>
    <lineage>
        <taxon>Bacteria</taxon>
        <taxon>Thermotogati</taxon>
        <taxon>Deinococcota</taxon>
        <taxon>Deinococci</taxon>
        <taxon>Deinococcales</taxon>
        <taxon>Deinococcaceae</taxon>
        <taxon>Deinococcus</taxon>
    </lineage>
</organism>
<proteinExistence type="inferred from homology"/>
<protein>
    <recommendedName>
        <fullName>Cell division topological specificity factor</fullName>
    </recommendedName>
</protein>
<name>MINE_DEIRA</name>